<accession>A1XIH3</accession>
<accession>A7UKV7</accession>
<organism>
    <name type="scientific">Trichophyton equinum</name>
    <name type="common">Horse ringworm fungus</name>
    <dbReference type="NCBI Taxonomy" id="63418"/>
    <lineage>
        <taxon>Eukaryota</taxon>
        <taxon>Fungi</taxon>
        <taxon>Dikarya</taxon>
        <taxon>Ascomycota</taxon>
        <taxon>Pezizomycotina</taxon>
        <taxon>Eurotiomycetes</taxon>
        <taxon>Eurotiomycetidae</taxon>
        <taxon>Onygenales</taxon>
        <taxon>Arthrodermataceae</taxon>
        <taxon>Trichophyton</taxon>
    </lineage>
</organism>
<protein>
    <recommendedName>
        <fullName>Subtilisin-like protease 7</fullName>
        <ecNumber>3.4.21.-</ecNumber>
    </recommendedName>
</protein>
<comment type="function">
    <text evidence="1">Secreted subtilisin-like serine protease with keratinolytic activity that contributes to pathogenicity.</text>
</comment>
<comment type="subcellular location">
    <subcellularLocation>
        <location evidence="4">Secreted</location>
    </subcellularLocation>
</comment>
<comment type="similarity">
    <text evidence="5">Belongs to the peptidase S8 family.</text>
</comment>
<comment type="sequence caution" evidence="5">
    <conflict type="erroneous gene model prediction">
        <sequence resource="EMBL-CDS" id="ABU50382"/>
    </conflict>
</comment>
<proteinExistence type="evidence at protein level"/>
<feature type="signal peptide" evidence="2">
    <location>
        <begin position="1"/>
        <end position="20"/>
    </location>
</feature>
<feature type="propeptide" id="PRO_0000380820" evidence="1">
    <location>
        <begin position="21"/>
        <end position="119"/>
    </location>
</feature>
<feature type="chain" id="PRO_0000380821" description="Subtilisin-like protease 7">
    <location>
        <begin position="120"/>
        <end position="401"/>
    </location>
</feature>
<feature type="domain" description="Inhibitor I9" evidence="2">
    <location>
        <begin position="36"/>
        <end position="118"/>
    </location>
</feature>
<feature type="domain" description="Peptidase S8" evidence="3">
    <location>
        <begin position="129"/>
        <end position="401"/>
    </location>
</feature>
<feature type="active site" description="Charge relay system" evidence="3">
    <location>
        <position position="161"/>
    </location>
</feature>
<feature type="active site" description="Charge relay system" evidence="3">
    <location>
        <position position="193"/>
    </location>
</feature>
<feature type="active site" description="Charge relay system" evidence="3">
    <location>
        <position position="347"/>
    </location>
</feature>
<feature type="glycosylation site" description="N-linked (GlcNAc...) asparagine" evidence="2">
    <location>
        <position position="58"/>
    </location>
</feature>
<feature type="glycosylation site" description="N-linked (GlcNAc...) asparagine" evidence="2">
    <location>
        <position position="223"/>
    </location>
</feature>
<feature type="glycosylation site" description="N-linked (GlcNAc...) asparagine" evidence="2">
    <location>
        <position position="253"/>
    </location>
</feature>
<feature type="glycosylation site" description="N-linked (GlcNAc...) asparagine" evidence="2">
    <location>
        <position position="397"/>
    </location>
</feature>
<gene>
    <name type="primary">SUB7</name>
</gene>
<keyword id="KW-0325">Glycoprotein</keyword>
<keyword id="KW-0378">Hydrolase</keyword>
<keyword id="KW-0645">Protease</keyword>
<keyword id="KW-0964">Secreted</keyword>
<keyword id="KW-0720">Serine protease</keyword>
<keyword id="KW-0732">Signal</keyword>
<keyword id="KW-0843">Virulence</keyword>
<keyword id="KW-0865">Zymogen</keyword>
<dbReference type="EC" id="3.4.21.-"/>
<dbReference type="EMBL" id="DQ382272">
    <property type="protein sequence ID" value="ABD38558.1"/>
    <property type="molecule type" value="Genomic_DNA"/>
</dbReference>
<dbReference type="EMBL" id="EU076572">
    <property type="protein sequence ID" value="ABU50382.1"/>
    <property type="status" value="ALT_SEQ"/>
    <property type="molecule type" value="Genomic_DNA"/>
</dbReference>
<dbReference type="SMR" id="A1XIH3"/>
<dbReference type="MEROPS" id="S08.061"/>
<dbReference type="GlyCosmos" id="A1XIH3">
    <property type="glycosylation" value="4 sites, No reported glycans"/>
</dbReference>
<dbReference type="VEuPathDB" id="FungiDB:TEQG_06283"/>
<dbReference type="GO" id="GO:0005576">
    <property type="term" value="C:extracellular region"/>
    <property type="evidence" value="ECO:0007669"/>
    <property type="project" value="UniProtKB-SubCell"/>
</dbReference>
<dbReference type="GO" id="GO:0004252">
    <property type="term" value="F:serine-type endopeptidase activity"/>
    <property type="evidence" value="ECO:0007669"/>
    <property type="project" value="InterPro"/>
</dbReference>
<dbReference type="GO" id="GO:0006508">
    <property type="term" value="P:proteolysis"/>
    <property type="evidence" value="ECO:0007669"/>
    <property type="project" value="UniProtKB-KW"/>
</dbReference>
<dbReference type="CDD" id="cd04077">
    <property type="entry name" value="Peptidases_S8_PCSK9_ProteinaseK_like"/>
    <property type="match status" value="1"/>
</dbReference>
<dbReference type="FunFam" id="3.40.50.200:FF:000014">
    <property type="entry name" value="Proteinase K"/>
    <property type="match status" value="1"/>
</dbReference>
<dbReference type="Gene3D" id="3.30.70.80">
    <property type="entry name" value="Peptidase S8 propeptide/proteinase inhibitor I9"/>
    <property type="match status" value="1"/>
</dbReference>
<dbReference type="Gene3D" id="3.40.50.200">
    <property type="entry name" value="Peptidase S8/S53 domain"/>
    <property type="match status" value="1"/>
</dbReference>
<dbReference type="InterPro" id="IPR034193">
    <property type="entry name" value="PCSK9_ProteinaseK-like"/>
</dbReference>
<dbReference type="InterPro" id="IPR000209">
    <property type="entry name" value="Peptidase_S8/S53_dom"/>
</dbReference>
<dbReference type="InterPro" id="IPR036852">
    <property type="entry name" value="Peptidase_S8/S53_dom_sf"/>
</dbReference>
<dbReference type="InterPro" id="IPR022398">
    <property type="entry name" value="Peptidase_S8_His-AS"/>
</dbReference>
<dbReference type="InterPro" id="IPR023828">
    <property type="entry name" value="Peptidase_S8_Ser-AS"/>
</dbReference>
<dbReference type="InterPro" id="IPR050131">
    <property type="entry name" value="Peptidase_S8_subtilisin-like"/>
</dbReference>
<dbReference type="InterPro" id="IPR015500">
    <property type="entry name" value="Peptidase_S8_subtilisin-rel"/>
</dbReference>
<dbReference type="InterPro" id="IPR010259">
    <property type="entry name" value="S8pro/Inhibitor_I9"/>
</dbReference>
<dbReference type="InterPro" id="IPR037045">
    <property type="entry name" value="S8pro/Inhibitor_I9_sf"/>
</dbReference>
<dbReference type="PANTHER" id="PTHR43806:SF11">
    <property type="entry name" value="CEREVISIN-RELATED"/>
    <property type="match status" value="1"/>
</dbReference>
<dbReference type="PANTHER" id="PTHR43806">
    <property type="entry name" value="PEPTIDASE S8"/>
    <property type="match status" value="1"/>
</dbReference>
<dbReference type="Pfam" id="PF05922">
    <property type="entry name" value="Inhibitor_I9"/>
    <property type="match status" value="1"/>
</dbReference>
<dbReference type="Pfam" id="PF00082">
    <property type="entry name" value="Peptidase_S8"/>
    <property type="match status" value="1"/>
</dbReference>
<dbReference type="PRINTS" id="PR00723">
    <property type="entry name" value="SUBTILISIN"/>
</dbReference>
<dbReference type="SUPFAM" id="SSF54897">
    <property type="entry name" value="Protease propeptides/inhibitors"/>
    <property type="match status" value="1"/>
</dbReference>
<dbReference type="SUPFAM" id="SSF52743">
    <property type="entry name" value="Subtilisin-like"/>
    <property type="match status" value="1"/>
</dbReference>
<dbReference type="PROSITE" id="PS51892">
    <property type="entry name" value="SUBTILASE"/>
    <property type="match status" value="1"/>
</dbReference>
<dbReference type="PROSITE" id="PS00137">
    <property type="entry name" value="SUBTILASE_HIS"/>
    <property type="match status" value="1"/>
</dbReference>
<dbReference type="PROSITE" id="PS00138">
    <property type="entry name" value="SUBTILASE_SER"/>
    <property type="match status" value="1"/>
</dbReference>
<name>SUB7_TRIEQ</name>
<evidence type="ECO:0000250" key="1"/>
<evidence type="ECO:0000255" key="2"/>
<evidence type="ECO:0000255" key="3">
    <source>
        <dbReference type="PROSITE-ProRule" id="PRU01240"/>
    </source>
</evidence>
<evidence type="ECO:0000269" key="4">
    <source>
    </source>
</evidence>
<evidence type="ECO:0000305" key="5"/>
<sequence length="401" mass="41865">MGFITKAIPLALAAASVINGAEILETRAGVQTLADKYIVVMNDGMSDKDFDSHRSWVNRTHRRRLIRRGAKAMGGMKYTYNFPTGLKGYSGHFDEQMIKEISKRADVKYIERDARVQINAIEQQDNVPSWGLARVGSREPGGTTYYYDSTAGEGTTAYIIDTGTDIQHEEFDGGRATWGENFADDMDMDCNGHGTHVSGTVGGRTFGVAKKSNIVAVKVLDCNGSGSNSGVIMGMQWATEDAQSKGADKAVVNMSLGGAFSQTSNDAAKAIAEGGVFLAVAAGNDNVDAAEASPASEPSICTVAASTEQDGKADFSNFGQVVDVYAPGDGITSAKPGGGSQVLSGTSMASPHVAGLAAYLIGLGKGGGPQLCDTIKQMAIDVIQNPGSSTTSKLINNGSGM</sequence>
<reference key="1">
    <citation type="journal article" date="2007" name="FEMS Microbiol. Lett.">
        <title>Closely related dermatophyte species produce different patterns of secreted proteins.</title>
        <authorList>
            <person name="Giddey K."/>
            <person name="Favre B."/>
            <person name="Quadroni M."/>
            <person name="Monod M."/>
        </authorList>
    </citation>
    <scope>NUCLEOTIDE SEQUENCE [GENOMIC DNA]</scope>
    <scope>IDENTIFICATION BY MASS SPECTROMETRY</scope>
    <scope>SUBCELLULAR LOCATION</scope>
    <source>
        <strain>IHEM 15219</strain>
    </source>
</reference>
<reference key="2">
    <citation type="submission" date="2007-08" db="EMBL/GenBank/DDBJ databases">
        <title>Comparing putative pathogenicity factors between Trichophyton tonsurans and Trichophyton equinum.</title>
        <authorList>
            <person name="Brown J.T."/>
            <person name="Preuett B.L."/>
            <person name="Abdel-Rahman S.M."/>
        </authorList>
    </citation>
    <scope>NUCLEOTIDE SEQUENCE [GENOMIC DNA] OF 1-339</scope>
</reference>